<gene>
    <name evidence="1" type="primary">glyQ</name>
    <name type="ordered locus">R00851</name>
    <name type="ORF">SMc00855</name>
</gene>
<sequence>MNPKRSFQALILTLHNYWADKGCAVLQPYDMEVGAGTFHPATTLRALGPKPWRAAYVQPSRRPTDGRYGENPNRLQHYYQYQVILKPNPSNLQELYLGSLEAIGLDPLLHDIRFVEDDWESPTLGAWGLGWECWCDGMEVSQFTYFQQVCGIECSPVSGELTYGLERLAMYVQGVDNVYDLNFNGREGAEKISYGDVFLQAEQEYSRHNFEYANTAMLHQHFIDAEKECLALLAAGAPGDSSNNRLHKCVFPAYDQCIKASHVFNLLDARGVISVTERQSYILRVRTLAKACGEAFLLTEAGGANWNREAA</sequence>
<accession>Q92RL5</accession>
<evidence type="ECO:0000255" key="1">
    <source>
        <dbReference type="HAMAP-Rule" id="MF_00254"/>
    </source>
</evidence>
<comment type="catalytic activity">
    <reaction evidence="1">
        <text>tRNA(Gly) + glycine + ATP = glycyl-tRNA(Gly) + AMP + diphosphate</text>
        <dbReference type="Rhea" id="RHEA:16013"/>
        <dbReference type="Rhea" id="RHEA-COMP:9664"/>
        <dbReference type="Rhea" id="RHEA-COMP:9683"/>
        <dbReference type="ChEBI" id="CHEBI:30616"/>
        <dbReference type="ChEBI" id="CHEBI:33019"/>
        <dbReference type="ChEBI" id="CHEBI:57305"/>
        <dbReference type="ChEBI" id="CHEBI:78442"/>
        <dbReference type="ChEBI" id="CHEBI:78522"/>
        <dbReference type="ChEBI" id="CHEBI:456215"/>
        <dbReference type="EC" id="6.1.1.14"/>
    </reaction>
</comment>
<comment type="subunit">
    <text evidence="1">Tetramer of two alpha and two beta subunits.</text>
</comment>
<comment type="subcellular location">
    <subcellularLocation>
        <location evidence="1">Cytoplasm</location>
    </subcellularLocation>
</comment>
<comment type="similarity">
    <text evidence="1">Belongs to the class-II aminoacyl-tRNA synthetase family.</text>
</comment>
<protein>
    <recommendedName>
        <fullName evidence="1">Glycine--tRNA ligase alpha subunit</fullName>
        <ecNumber evidence="1">6.1.1.14</ecNumber>
    </recommendedName>
    <alternativeName>
        <fullName evidence="1">Glycyl-tRNA synthetase alpha subunit</fullName>
        <shortName evidence="1">GlyRS</shortName>
    </alternativeName>
</protein>
<name>SYGA_RHIME</name>
<feature type="chain" id="PRO_0000072859" description="Glycine--tRNA ligase alpha subunit">
    <location>
        <begin position="1"/>
        <end position="311"/>
    </location>
</feature>
<keyword id="KW-0030">Aminoacyl-tRNA synthetase</keyword>
<keyword id="KW-0067">ATP-binding</keyword>
<keyword id="KW-0963">Cytoplasm</keyword>
<keyword id="KW-0436">Ligase</keyword>
<keyword id="KW-0547">Nucleotide-binding</keyword>
<keyword id="KW-0648">Protein biosynthesis</keyword>
<keyword id="KW-1185">Reference proteome</keyword>
<organism>
    <name type="scientific">Rhizobium meliloti (strain 1021)</name>
    <name type="common">Ensifer meliloti</name>
    <name type="synonym">Sinorhizobium meliloti</name>
    <dbReference type="NCBI Taxonomy" id="266834"/>
    <lineage>
        <taxon>Bacteria</taxon>
        <taxon>Pseudomonadati</taxon>
        <taxon>Pseudomonadota</taxon>
        <taxon>Alphaproteobacteria</taxon>
        <taxon>Hyphomicrobiales</taxon>
        <taxon>Rhizobiaceae</taxon>
        <taxon>Sinorhizobium/Ensifer group</taxon>
        <taxon>Sinorhizobium</taxon>
    </lineage>
</organism>
<reference key="1">
    <citation type="journal article" date="2001" name="Proc. Natl. Acad. Sci. U.S.A.">
        <title>Analysis of the chromosome sequence of the legume symbiont Sinorhizobium meliloti strain 1021.</title>
        <authorList>
            <person name="Capela D."/>
            <person name="Barloy-Hubler F."/>
            <person name="Gouzy J."/>
            <person name="Bothe G."/>
            <person name="Ampe F."/>
            <person name="Batut J."/>
            <person name="Boistard P."/>
            <person name="Becker A."/>
            <person name="Boutry M."/>
            <person name="Cadieu E."/>
            <person name="Dreano S."/>
            <person name="Gloux S."/>
            <person name="Godrie T."/>
            <person name="Goffeau A."/>
            <person name="Kahn D."/>
            <person name="Kiss E."/>
            <person name="Lelaure V."/>
            <person name="Masuy D."/>
            <person name="Pohl T."/>
            <person name="Portetelle D."/>
            <person name="Puehler A."/>
            <person name="Purnelle B."/>
            <person name="Ramsperger U."/>
            <person name="Renard C."/>
            <person name="Thebault P."/>
            <person name="Vandenbol M."/>
            <person name="Weidner S."/>
            <person name="Galibert F."/>
        </authorList>
    </citation>
    <scope>NUCLEOTIDE SEQUENCE [LARGE SCALE GENOMIC DNA]</scope>
    <source>
        <strain>1021</strain>
    </source>
</reference>
<reference key="2">
    <citation type="journal article" date="2001" name="Science">
        <title>The composite genome of the legume symbiont Sinorhizobium meliloti.</title>
        <authorList>
            <person name="Galibert F."/>
            <person name="Finan T.M."/>
            <person name="Long S.R."/>
            <person name="Puehler A."/>
            <person name="Abola P."/>
            <person name="Ampe F."/>
            <person name="Barloy-Hubler F."/>
            <person name="Barnett M.J."/>
            <person name="Becker A."/>
            <person name="Boistard P."/>
            <person name="Bothe G."/>
            <person name="Boutry M."/>
            <person name="Bowser L."/>
            <person name="Buhrmester J."/>
            <person name="Cadieu E."/>
            <person name="Capela D."/>
            <person name="Chain P."/>
            <person name="Cowie A."/>
            <person name="Davis R.W."/>
            <person name="Dreano S."/>
            <person name="Federspiel N.A."/>
            <person name="Fisher R.F."/>
            <person name="Gloux S."/>
            <person name="Godrie T."/>
            <person name="Goffeau A."/>
            <person name="Golding B."/>
            <person name="Gouzy J."/>
            <person name="Gurjal M."/>
            <person name="Hernandez-Lucas I."/>
            <person name="Hong A."/>
            <person name="Huizar L."/>
            <person name="Hyman R.W."/>
            <person name="Jones T."/>
            <person name="Kahn D."/>
            <person name="Kahn M.L."/>
            <person name="Kalman S."/>
            <person name="Keating D.H."/>
            <person name="Kiss E."/>
            <person name="Komp C."/>
            <person name="Lelaure V."/>
            <person name="Masuy D."/>
            <person name="Palm C."/>
            <person name="Peck M.C."/>
            <person name="Pohl T.M."/>
            <person name="Portetelle D."/>
            <person name="Purnelle B."/>
            <person name="Ramsperger U."/>
            <person name="Surzycki R."/>
            <person name="Thebault P."/>
            <person name="Vandenbol M."/>
            <person name="Vorhoelter F.J."/>
            <person name="Weidner S."/>
            <person name="Wells D.H."/>
            <person name="Wong K."/>
            <person name="Yeh K.-C."/>
            <person name="Batut J."/>
        </authorList>
    </citation>
    <scope>NUCLEOTIDE SEQUENCE [LARGE SCALE GENOMIC DNA]</scope>
    <source>
        <strain>1021</strain>
    </source>
</reference>
<dbReference type="EC" id="6.1.1.14" evidence="1"/>
<dbReference type="EMBL" id="AL591688">
    <property type="protein sequence ID" value="CAC45423.1"/>
    <property type="molecule type" value="Genomic_DNA"/>
</dbReference>
<dbReference type="RefSeq" id="NP_384957.1">
    <property type="nucleotide sequence ID" value="NC_003047.1"/>
</dbReference>
<dbReference type="SMR" id="Q92RL5"/>
<dbReference type="EnsemblBacteria" id="CAC45423">
    <property type="protein sequence ID" value="CAC45423"/>
    <property type="gene ID" value="SMc00855"/>
</dbReference>
<dbReference type="KEGG" id="sme:SMc00855"/>
<dbReference type="PATRIC" id="fig|266834.11.peg.2244"/>
<dbReference type="eggNOG" id="COG0752">
    <property type="taxonomic scope" value="Bacteria"/>
</dbReference>
<dbReference type="HOGENOM" id="CLU_057066_1_0_5"/>
<dbReference type="OrthoDB" id="9802183at2"/>
<dbReference type="Proteomes" id="UP000001976">
    <property type="component" value="Chromosome"/>
</dbReference>
<dbReference type="GO" id="GO:0005829">
    <property type="term" value="C:cytosol"/>
    <property type="evidence" value="ECO:0007669"/>
    <property type="project" value="TreeGrafter"/>
</dbReference>
<dbReference type="GO" id="GO:0005524">
    <property type="term" value="F:ATP binding"/>
    <property type="evidence" value="ECO:0007669"/>
    <property type="project" value="UniProtKB-UniRule"/>
</dbReference>
<dbReference type="GO" id="GO:0004820">
    <property type="term" value="F:glycine-tRNA ligase activity"/>
    <property type="evidence" value="ECO:0007669"/>
    <property type="project" value="UniProtKB-UniRule"/>
</dbReference>
<dbReference type="GO" id="GO:0006426">
    <property type="term" value="P:glycyl-tRNA aminoacylation"/>
    <property type="evidence" value="ECO:0007669"/>
    <property type="project" value="UniProtKB-UniRule"/>
</dbReference>
<dbReference type="CDD" id="cd00733">
    <property type="entry name" value="GlyRS_alpha_core"/>
    <property type="match status" value="1"/>
</dbReference>
<dbReference type="FunFam" id="3.30.930.10:FF:000006">
    <property type="entry name" value="Glycine--tRNA ligase alpha subunit"/>
    <property type="match status" value="1"/>
</dbReference>
<dbReference type="Gene3D" id="3.30.930.10">
    <property type="entry name" value="Bira Bifunctional Protein, Domain 2"/>
    <property type="match status" value="1"/>
</dbReference>
<dbReference type="Gene3D" id="1.20.58.180">
    <property type="entry name" value="Class II aaRS and biotin synthetases, domain 2"/>
    <property type="match status" value="1"/>
</dbReference>
<dbReference type="HAMAP" id="MF_00254">
    <property type="entry name" value="Gly_tRNA_synth_alpha"/>
    <property type="match status" value="1"/>
</dbReference>
<dbReference type="InterPro" id="IPR045864">
    <property type="entry name" value="aa-tRNA-synth_II/BPL/LPL"/>
</dbReference>
<dbReference type="InterPro" id="IPR006194">
    <property type="entry name" value="Gly-tRNA-synth_heterodimer"/>
</dbReference>
<dbReference type="InterPro" id="IPR002310">
    <property type="entry name" value="Gly-tRNA_ligase_asu"/>
</dbReference>
<dbReference type="NCBIfam" id="TIGR00388">
    <property type="entry name" value="glyQ"/>
    <property type="match status" value="1"/>
</dbReference>
<dbReference type="NCBIfam" id="NF006827">
    <property type="entry name" value="PRK09348.1"/>
    <property type="match status" value="1"/>
</dbReference>
<dbReference type="PANTHER" id="PTHR30075:SF2">
    <property type="entry name" value="GLYCINE--TRNA LIGASE, CHLOROPLASTIC_MITOCHONDRIAL 2"/>
    <property type="match status" value="1"/>
</dbReference>
<dbReference type="PANTHER" id="PTHR30075">
    <property type="entry name" value="GLYCYL-TRNA SYNTHETASE"/>
    <property type="match status" value="1"/>
</dbReference>
<dbReference type="Pfam" id="PF02091">
    <property type="entry name" value="tRNA-synt_2e"/>
    <property type="match status" value="1"/>
</dbReference>
<dbReference type="PRINTS" id="PR01044">
    <property type="entry name" value="TRNASYNTHGA"/>
</dbReference>
<dbReference type="SUPFAM" id="SSF55681">
    <property type="entry name" value="Class II aaRS and biotin synthetases"/>
    <property type="match status" value="1"/>
</dbReference>
<dbReference type="PROSITE" id="PS50861">
    <property type="entry name" value="AA_TRNA_LIGASE_II_GLYAB"/>
    <property type="match status" value="1"/>
</dbReference>
<proteinExistence type="inferred from homology"/>